<sequence>MRLILLGAPGAGKGTQAAFICQKYGIPQISTGDMLRAAVKAGTPLGQQAKAVMDAGKLVSDDLIINLVKDRIAQPDCAKGFLFDGFPRTIPQADAMKAAGVKLDYVLEIDVPFDAIIERMSGRRSHPASGRTYHVKFNPPKVEGKDDVTGEDLIQREDDKEDTVKKRLEVYSAQTRPLVEYYSTWAKNDPANAPKYRAISGTGTVEEITRRALAALAD</sequence>
<gene>
    <name evidence="1" type="primary">adk</name>
    <name type="ordered locus">Aave_2561</name>
</gene>
<reference key="1">
    <citation type="submission" date="2006-12" db="EMBL/GenBank/DDBJ databases">
        <title>Complete sequence of Acidovorax avenae subsp. citrulli AAC00-1.</title>
        <authorList>
            <person name="Copeland A."/>
            <person name="Lucas S."/>
            <person name="Lapidus A."/>
            <person name="Barry K."/>
            <person name="Detter J.C."/>
            <person name="Glavina del Rio T."/>
            <person name="Dalin E."/>
            <person name="Tice H."/>
            <person name="Pitluck S."/>
            <person name="Kiss H."/>
            <person name="Brettin T."/>
            <person name="Bruce D."/>
            <person name="Han C."/>
            <person name="Tapia R."/>
            <person name="Gilna P."/>
            <person name="Schmutz J."/>
            <person name="Larimer F."/>
            <person name="Land M."/>
            <person name="Hauser L."/>
            <person name="Kyrpides N."/>
            <person name="Kim E."/>
            <person name="Stahl D."/>
            <person name="Richardson P."/>
        </authorList>
    </citation>
    <scope>NUCLEOTIDE SEQUENCE [LARGE SCALE GENOMIC DNA]</scope>
    <source>
        <strain>AAC00-1</strain>
    </source>
</reference>
<organism>
    <name type="scientific">Paracidovorax citrulli (strain AAC00-1)</name>
    <name type="common">Acidovorax citrulli</name>
    <dbReference type="NCBI Taxonomy" id="397945"/>
    <lineage>
        <taxon>Bacteria</taxon>
        <taxon>Pseudomonadati</taxon>
        <taxon>Pseudomonadota</taxon>
        <taxon>Betaproteobacteria</taxon>
        <taxon>Burkholderiales</taxon>
        <taxon>Comamonadaceae</taxon>
        <taxon>Paracidovorax</taxon>
    </lineage>
</organism>
<keyword id="KW-0067">ATP-binding</keyword>
<keyword id="KW-0963">Cytoplasm</keyword>
<keyword id="KW-0418">Kinase</keyword>
<keyword id="KW-0545">Nucleotide biosynthesis</keyword>
<keyword id="KW-0547">Nucleotide-binding</keyword>
<keyword id="KW-0808">Transferase</keyword>
<comment type="function">
    <text evidence="1">Catalyzes the reversible transfer of the terminal phosphate group between ATP and AMP. Plays an important role in cellular energy homeostasis and in adenine nucleotide metabolism.</text>
</comment>
<comment type="catalytic activity">
    <reaction evidence="1">
        <text>AMP + ATP = 2 ADP</text>
        <dbReference type="Rhea" id="RHEA:12973"/>
        <dbReference type="ChEBI" id="CHEBI:30616"/>
        <dbReference type="ChEBI" id="CHEBI:456215"/>
        <dbReference type="ChEBI" id="CHEBI:456216"/>
        <dbReference type="EC" id="2.7.4.3"/>
    </reaction>
</comment>
<comment type="pathway">
    <text evidence="1">Purine metabolism; AMP biosynthesis via salvage pathway; AMP from ADP: step 1/1.</text>
</comment>
<comment type="subunit">
    <text evidence="1">Monomer.</text>
</comment>
<comment type="subcellular location">
    <subcellularLocation>
        <location evidence="1">Cytoplasm</location>
    </subcellularLocation>
</comment>
<comment type="domain">
    <text evidence="1">Consists of three domains, a large central CORE domain and two small peripheral domains, NMPbind and LID, which undergo movements during catalysis. The LID domain closes over the site of phosphoryl transfer upon ATP binding. Assembling and dissambling the active center during each catalytic cycle provides an effective means to prevent ATP hydrolysis.</text>
</comment>
<comment type="similarity">
    <text evidence="1">Belongs to the adenylate kinase family.</text>
</comment>
<dbReference type="EC" id="2.7.4.3" evidence="1"/>
<dbReference type="EMBL" id="CP000512">
    <property type="protein sequence ID" value="ABM33134.1"/>
    <property type="molecule type" value="Genomic_DNA"/>
</dbReference>
<dbReference type="RefSeq" id="WP_011795659.1">
    <property type="nucleotide sequence ID" value="NC_008752.1"/>
</dbReference>
<dbReference type="SMR" id="A1TQ96"/>
<dbReference type="STRING" id="397945.Aave_2561"/>
<dbReference type="GeneID" id="79792148"/>
<dbReference type="KEGG" id="aav:Aave_2561"/>
<dbReference type="eggNOG" id="COG0563">
    <property type="taxonomic scope" value="Bacteria"/>
</dbReference>
<dbReference type="HOGENOM" id="CLU_032354_1_2_4"/>
<dbReference type="OrthoDB" id="9805030at2"/>
<dbReference type="UniPathway" id="UPA00588">
    <property type="reaction ID" value="UER00649"/>
</dbReference>
<dbReference type="Proteomes" id="UP000002596">
    <property type="component" value="Chromosome"/>
</dbReference>
<dbReference type="GO" id="GO:0005737">
    <property type="term" value="C:cytoplasm"/>
    <property type="evidence" value="ECO:0007669"/>
    <property type="project" value="UniProtKB-SubCell"/>
</dbReference>
<dbReference type="GO" id="GO:0004017">
    <property type="term" value="F:adenylate kinase activity"/>
    <property type="evidence" value="ECO:0007669"/>
    <property type="project" value="UniProtKB-UniRule"/>
</dbReference>
<dbReference type="GO" id="GO:0005524">
    <property type="term" value="F:ATP binding"/>
    <property type="evidence" value="ECO:0007669"/>
    <property type="project" value="UniProtKB-UniRule"/>
</dbReference>
<dbReference type="GO" id="GO:0044209">
    <property type="term" value="P:AMP salvage"/>
    <property type="evidence" value="ECO:0007669"/>
    <property type="project" value="UniProtKB-UniRule"/>
</dbReference>
<dbReference type="CDD" id="cd01428">
    <property type="entry name" value="ADK"/>
    <property type="match status" value="1"/>
</dbReference>
<dbReference type="FunFam" id="3.40.50.300:FF:000106">
    <property type="entry name" value="Adenylate kinase mitochondrial"/>
    <property type="match status" value="1"/>
</dbReference>
<dbReference type="Gene3D" id="3.40.50.300">
    <property type="entry name" value="P-loop containing nucleotide triphosphate hydrolases"/>
    <property type="match status" value="1"/>
</dbReference>
<dbReference type="HAMAP" id="MF_00235">
    <property type="entry name" value="Adenylate_kinase_Adk"/>
    <property type="match status" value="1"/>
</dbReference>
<dbReference type="InterPro" id="IPR006259">
    <property type="entry name" value="Adenyl_kin_sub"/>
</dbReference>
<dbReference type="InterPro" id="IPR000850">
    <property type="entry name" value="Adenylat/UMP-CMP_kin"/>
</dbReference>
<dbReference type="InterPro" id="IPR033690">
    <property type="entry name" value="Adenylat_kinase_CS"/>
</dbReference>
<dbReference type="InterPro" id="IPR007862">
    <property type="entry name" value="Adenylate_kinase_lid-dom"/>
</dbReference>
<dbReference type="InterPro" id="IPR027417">
    <property type="entry name" value="P-loop_NTPase"/>
</dbReference>
<dbReference type="NCBIfam" id="TIGR01351">
    <property type="entry name" value="adk"/>
    <property type="match status" value="1"/>
</dbReference>
<dbReference type="NCBIfam" id="NF001379">
    <property type="entry name" value="PRK00279.1-1"/>
    <property type="match status" value="1"/>
</dbReference>
<dbReference type="NCBIfam" id="NF001380">
    <property type="entry name" value="PRK00279.1-2"/>
    <property type="match status" value="1"/>
</dbReference>
<dbReference type="NCBIfam" id="NF001381">
    <property type="entry name" value="PRK00279.1-3"/>
    <property type="match status" value="1"/>
</dbReference>
<dbReference type="NCBIfam" id="NF011100">
    <property type="entry name" value="PRK14527.1"/>
    <property type="match status" value="1"/>
</dbReference>
<dbReference type="PANTHER" id="PTHR23359">
    <property type="entry name" value="NUCLEOTIDE KINASE"/>
    <property type="match status" value="1"/>
</dbReference>
<dbReference type="Pfam" id="PF00406">
    <property type="entry name" value="ADK"/>
    <property type="match status" value="1"/>
</dbReference>
<dbReference type="Pfam" id="PF05191">
    <property type="entry name" value="ADK_lid"/>
    <property type="match status" value="1"/>
</dbReference>
<dbReference type="PRINTS" id="PR00094">
    <property type="entry name" value="ADENYLTKNASE"/>
</dbReference>
<dbReference type="SUPFAM" id="SSF52540">
    <property type="entry name" value="P-loop containing nucleoside triphosphate hydrolases"/>
    <property type="match status" value="1"/>
</dbReference>
<dbReference type="PROSITE" id="PS00113">
    <property type="entry name" value="ADENYLATE_KINASE"/>
    <property type="match status" value="1"/>
</dbReference>
<feature type="chain" id="PRO_1000058775" description="Adenylate kinase">
    <location>
        <begin position="1"/>
        <end position="218"/>
    </location>
</feature>
<feature type="region of interest" description="NMP" evidence="1">
    <location>
        <begin position="30"/>
        <end position="59"/>
    </location>
</feature>
<feature type="region of interest" description="LID" evidence="1">
    <location>
        <begin position="122"/>
        <end position="159"/>
    </location>
</feature>
<feature type="region of interest" description="Disordered" evidence="2">
    <location>
        <begin position="127"/>
        <end position="147"/>
    </location>
</feature>
<feature type="binding site" evidence="1">
    <location>
        <begin position="10"/>
        <end position="15"/>
    </location>
    <ligand>
        <name>ATP</name>
        <dbReference type="ChEBI" id="CHEBI:30616"/>
    </ligand>
</feature>
<feature type="binding site" evidence="1">
    <location>
        <position position="31"/>
    </location>
    <ligand>
        <name>AMP</name>
        <dbReference type="ChEBI" id="CHEBI:456215"/>
    </ligand>
</feature>
<feature type="binding site" evidence="1">
    <location>
        <position position="36"/>
    </location>
    <ligand>
        <name>AMP</name>
        <dbReference type="ChEBI" id="CHEBI:456215"/>
    </ligand>
</feature>
<feature type="binding site" evidence="1">
    <location>
        <begin position="57"/>
        <end position="59"/>
    </location>
    <ligand>
        <name>AMP</name>
        <dbReference type="ChEBI" id="CHEBI:456215"/>
    </ligand>
</feature>
<feature type="binding site" evidence="1">
    <location>
        <begin position="85"/>
        <end position="88"/>
    </location>
    <ligand>
        <name>AMP</name>
        <dbReference type="ChEBI" id="CHEBI:456215"/>
    </ligand>
</feature>
<feature type="binding site" evidence="1">
    <location>
        <position position="92"/>
    </location>
    <ligand>
        <name>AMP</name>
        <dbReference type="ChEBI" id="CHEBI:456215"/>
    </ligand>
</feature>
<feature type="binding site" evidence="1">
    <location>
        <position position="123"/>
    </location>
    <ligand>
        <name>ATP</name>
        <dbReference type="ChEBI" id="CHEBI:30616"/>
    </ligand>
</feature>
<feature type="binding site" evidence="1">
    <location>
        <begin position="132"/>
        <end position="133"/>
    </location>
    <ligand>
        <name>ATP</name>
        <dbReference type="ChEBI" id="CHEBI:30616"/>
    </ligand>
</feature>
<feature type="binding site" evidence="1">
    <location>
        <position position="156"/>
    </location>
    <ligand>
        <name>AMP</name>
        <dbReference type="ChEBI" id="CHEBI:456215"/>
    </ligand>
</feature>
<feature type="binding site" evidence="1">
    <location>
        <position position="167"/>
    </location>
    <ligand>
        <name>AMP</name>
        <dbReference type="ChEBI" id="CHEBI:456215"/>
    </ligand>
</feature>
<feature type="binding site" evidence="1">
    <location>
        <position position="203"/>
    </location>
    <ligand>
        <name>ATP</name>
        <dbReference type="ChEBI" id="CHEBI:30616"/>
    </ligand>
</feature>
<evidence type="ECO:0000255" key="1">
    <source>
        <dbReference type="HAMAP-Rule" id="MF_00235"/>
    </source>
</evidence>
<evidence type="ECO:0000256" key="2">
    <source>
        <dbReference type="SAM" id="MobiDB-lite"/>
    </source>
</evidence>
<name>KAD_PARC0</name>
<protein>
    <recommendedName>
        <fullName evidence="1">Adenylate kinase</fullName>
        <shortName evidence="1">AK</shortName>
        <ecNumber evidence="1">2.7.4.3</ecNumber>
    </recommendedName>
    <alternativeName>
        <fullName evidence="1">ATP-AMP transphosphorylase</fullName>
    </alternativeName>
    <alternativeName>
        <fullName evidence="1">ATP:AMP phosphotransferase</fullName>
    </alternativeName>
    <alternativeName>
        <fullName evidence="1">Adenylate monophosphate kinase</fullName>
    </alternativeName>
</protein>
<proteinExistence type="inferred from homology"/>
<accession>A1TQ96</accession>